<dbReference type="EMBL" id="Z21875">
    <property type="protein sequence ID" value="CAA79921.1"/>
    <property type="molecule type" value="mRNA"/>
</dbReference>
<dbReference type="PIR" id="S32038">
    <property type="entry name" value="S32038"/>
</dbReference>
<dbReference type="GO" id="GO:0022625">
    <property type="term" value="C:cytosolic large ribosomal subunit"/>
    <property type="evidence" value="ECO:0007669"/>
    <property type="project" value="InterPro"/>
</dbReference>
<dbReference type="GO" id="GO:0003735">
    <property type="term" value="F:structural constituent of ribosome"/>
    <property type="evidence" value="ECO:0007669"/>
    <property type="project" value="InterPro"/>
</dbReference>
<dbReference type="GO" id="GO:0002182">
    <property type="term" value="P:cytoplasmic translational elongation"/>
    <property type="evidence" value="ECO:0007669"/>
    <property type="project" value="InterPro"/>
</dbReference>
<dbReference type="CDD" id="cd05833">
    <property type="entry name" value="Ribosomal_P2"/>
    <property type="match status" value="1"/>
</dbReference>
<dbReference type="FunFam" id="1.10.10.1410:FF:000002">
    <property type="entry name" value="60S acidic ribosomal protein P2"/>
    <property type="match status" value="1"/>
</dbReference>
<dbReference type="Gene3D" id="1.10.10.1410">
    <property type="match status" value="1"/>
</dbReference>
<dbReference type="HAMAP" id="MF_01478">
    <property type="entry name" value="Ribosomal_L12_arch"/>
    <property type="match status" value="1"/>
</dbReference>
<dbReference type="InterPro" id="IPR038716">
    <property type="entry name" value="P1/P2_N_sf"/>
</dbReference>
<dbReference type="InterPro" id="IPR027534">
    <property type="entry name" value="Ribosomal_P1/P2"/>
</dbReference>
<dbReference type="InterPro" id="IPR001859">
    <property type="entry name" value="Ribosomal_P1/P2_euk"/>
</dbReference>
<dbReference type="InterPro" id="IPR044076">
    <property type="entry name" value="Ribosomal_P2"/>
</dbReference>
<dbReference type="PANTHER" id="PTHR21141">
    <property type="entry name" value="60S ACIDIC RIBOSOMAL PROTEIN FAMILY MEMBER"/>
    <property type="match status" value="1"/>
</dbReference>
<dbReference type="PANTHER" id="PTHR21141:SF58">
    <property type="entry name" value="ACIDIC RIBOSOMAL PROTEIN P2, PUTATIVE-RELATED"/>
    <property type="match status" value="1"/>
</dbReference>
<dbReference type="Pfam" id="PF00428">
    <property type="entry name" value="Ribosomal_60s"/>
    <property type="match status" value="1"/>
</dbReference>
<dbReference type="PRINTS" id="PR00456">
    <property type="entry name" value="RIBOSOMALP2"/>
</dbReference>
<organism>
    <name type="scientific">Trypanosoma brucei brucei</name>
    <dbReference type="NCBI Taxonomy" id="5702"/>
    <lineage>
        <taxon>Eukaryota</taxon>
        <taxon>Discoba</taxon>
        <taxon>Euglenozoa</taxon>
        <taxon>Kinetoplastea</taxon>
        <taxon>Metakinetoplastina</taxon>
        <taxon>Trypanosomatida</taxon>
        <taxon>Trypanosomatidae</taxon>
        <taxon>Trypanosoma</taxon>
    </lineage>
</organism>
<accession>P51408</accession>
<name>RLA2_TRYBB</name>
<evidence type="ECO:0000250" key="1"/>
<evidence type="ECO:0000256" key="2">
    <source>
        <dbReference type="SAM" id="MobiDB-lite"/>
    </source>
</evidence>
<evidence type="ECO:0000305" key="3"/>
<keyword id="KW-0597">Phosphoprotein</keyword>
<keyword id="KW-0687">Ribonucleoprotein</keyword>
<keyword id="KW-0689">Ribosomal protein</keyword>
<feature type="chain" id="PRO_0000157667" description="Large ribosomal subunit protein P2">
    <location>
        <begin position="1"/>
        <end position="107"/>
    </location>
</feature>
<feature type="region of interest" description="Disordered" evidence="2">
    <location>
        <begin position="86"/>
        <end position="107"/>
    </location>
</feature>
<feature type="compositionally biased region" description="Acidic residues" evidence="2">
    <location>
        <begin position="92"/>
        <end position="101"/>
    </location>
</feature>
<comment type="function">
    <text>Plays an important role in the elongation step of protein synthesis.</text>
</comment>
<comment type="subunit">
    <text>P1 and P2 exist as dimers at the large ribosomal subunit.</text>
</comment>
<comment type="PTM">
    <text evidence="1">Phosphorylated.</text>
</comment>
<comment type="similarity">
    <text evidence="3">Belongs to the eukaryotic ribosomal protein P1/P2 family.</text>
</comment>
<protein>
    <recommendedName>
        <fullName evidence="3">Large ribosomal subunit protein P2</fullName>
    </recommendedName>
    <alternativeName>
        <fullName>60S acidic ribosomal protein P2</fullName>
    </alternativeName>
</protein>
<sequence length="107" mass="10485">MKYLAAYALISLSGKTPSKADVEAVLKAAGVPVDSSRVEELLSEVEGKDFDALCAEGKAKLVGGVTAGGAAPSGGAAAHAAAASAPAAAAAEAEEEDDDDMGFGLFD</sequence>
<reference key="1">
    <citation type="submission" date="1993-03" db="EMBL/GenBank/DDBJ databases">
        <authorList>
            <person name="Kunz S."/>
            <person name="Mueller N."/>
            <person name="Seebeck T."/>
        </authorList>
    </citation>
    <scope>NUCLEOTIDE SEQUENCE [MRNA]</scope>
    <source>
        <strain>427</strain>
    </source>
</reference>
<proteinExistence type="inferred from homology"/>